<sequence length="130" mass="14617">MIPPNATAVMPFLTTLGEETAHLQGSSATSLARRGPLGDDGQMEALYILMVLGFFGFFTLGIMLSYIRSQKLEHSHDPFNVYIEANDWQEKDRAYFQARVLESCRGCYVLENQLAVEHPDTHLPELKPSL</sequence>
<feature type="chain" id="PRO_0000144282" description="Potassium voltage-gated channel subfamily E member 1">
    <location>
        <begin position="1"/>
        <end position="130"/>
    </location>
</feature>
<feature type="transmembrane region" description="Helical" evidence="5">
    <location>
        <begin position="45"/>
        <end position="67"/>
    </location>
</feature>
<feature type="topological domain" description="Cytoplasmic" evidence="5">
    <location>
        <begin position="68"/>
        <end position="130"/>
    </location>
</feature>
<feature type="modified residue" description="Phosphoserine; by PKC" evidence="1">
    <location>
        <position position="103"/>
    </location>
</feature>
<feature type="glycosylation site" description="N-linked (GlcNAc...) asparagine" evidence="5">
    <location>
        <position position="5"/>
    </location>
</feature>
<keyword id="KW-1003">Cell membrane</keyword>
<keyword id="KW-0325">Glycoprotein</keyword>
<keyword id="KW-0407">Ion channel</keyword>
<keyword id="KW-0406">Ion transport</keyword>
<keyword id="KW-0472">Membrane</keyword>
<keyword id="KW-0597">Phosphoprotein</keyword>
<keyword id="KW-0630">Potassium</keyword>
<keyword id="KW-0631">Potassium channel</keyword>
<keyword id="KW-0633">Potassium transport</keyword>
<keyword id="KW-1185">Reference proteome</keyword>
<keyword id="KW-0812">Transmembrane</keyword>
<keyword id="KW-1133">Transmembrane helix</keyword>
<keyword id="KW-0813">Transport</keyword>
<keyword id="KW-0851">Voltage-gated channel</keyword>
<organism>
    <name type="scientific">Oryctolagus cuniculus</name>
    <name type="common">Rabbit</name>
    <dbReference type="NCBI Taxonomy" id="9986"/>
    <lineage>
        <taxon>Eukaryota</taxon>
        <taxon>Metazoa</taxon>
        <taxon>Chordata</taxon>
        <taxon>Craniata</taxon>
        <taxon>Vertebrata</taxon>
        <taxon>Euteleostomi</taxon>
        <taxon>Mammalia</taxon>
        <taxon>Eutheria</taxon>
        <taxon>Euarchontoglires</taxon>
        <taxon>Glires</taxon>
        <taxon>Lagomorpha</taxon>
        <taxon>Leporidae</taxon>
        <taxon>Oryctolagus</taxon>
    </lineage>
</organism>
<accession>Q28705</accession>
<reference key="1">
    <citation type="submission" date="1996-04" db="EMBL/GenBank/DDBJ databases">
        <title>Evidence of the slow component of the cardiac delayed rectifier K+ current (IKs) in rabbit ventricular myocytes.</title>
        <authorList>
            <person name="Fermini B."/>
            <person name="Jurkiewicz N.K."/>
            <person name="Jow B."/>
            <person name="Guinosso P."/>
            <person name="Folander K."/>
            <person name="Swanson R."/>
            <person name="Salata J.J."/>
        </authorList>
    </citation>
    <scope>NUCLEOTIDE SEQUENCE [GENOMIC DNA]</scope>
    <source>
        <strain>New Zealand white</strain>
    </source>
</reference>
<dbReference type="EMBL" id="L41659">
    <property type="protein sequence ID" value="AAA93505.1"/>
    <property type="molecule type" value="Genomic_DNA"/>
</dbReference>
<dbReference type="RefSeq" id="NP_001103292.1">
    <property type="nucleotide sequence ID" value="NM_001109822.1"/>
</dbReference>
<dbReference type="SMR" id="Q28705"/>
<dbReference type="FunCoup" id="Q28705">
    <property type="interactions" value="3"/>
</dbReference>
<dbReference type="STRING" id="9986.ENSOCUP00000011595"/>
<dbReference type="BindingDB" id="Q28705"/>
<dbReference type="ChEMBL" id="CHEMBL1075200"/>
<dbReference type="GlyCosmos" id="Q28705">
    <property type="glycosylation" value="1 site, No reported glycans"/>
</dbReference>
<dbReference type="PaxDb" id="9986-ENSOCUP00000011595"/>
<dbReference type="GeneID" id="100126000"/>
<dbReference type="KEGG" id="ocu:100126000"/>
<dbReference type="CTD" id="3753"/>
<dbReference type="eggNOG" id="ENOG502SG7D">
    <property type="taxonomic scope" value="Eukaryota"/>
</dbReference>
<dbReference type="InParanoid" id="Q28705"/>
<dbReference type="OrthoDB" id="8772344at2759"/>
<dbReference type="PRO" id="PR:Q28705"/>
<dbReference type="Proteomes" id="UP000001811">
    <property type="component" value="Unplaced"/>
</dbReference>
<dbReference type="GO" id="GO:0016324">
    <property type="term" value="C:apical plasma membrane"/>
    <property type="evidence" value="ECO:0007669"/>
    <property type="project" value="UniProtKB-SubCell"/>
</dbReference>
<dbReference type="GO" id="GO:0045121">
    <property type="term" value="C:membrane raft"/>
    <property type="evidence" value="ECO:0007669"/>
    <property type="project" value="UniProtKB-SubCell"/>
</dbReference>
<dbReference type="GO" id="GO:0005886">
    <property type="term" value="C:plasma membrane"/>
    <property type="evidence" value="ECO:0000250"/>
    <property type="project" value="UniProtKB"/>
</dbReference>
<dbReference type="GO" id="GO:0008076">
    <property type="term" value="C:voltage-gated potassium channel complex"/>
    <property type="evidence" value="ECO:0007669"/>
    <property type="project" value="TreeGrafter"/>
</dbReference>
<dbReference type="GO" id="GO:0005251">
    <property type="term" value="F:delayed rectifier potassium channel activity"/>
    <property type="evidence" value="ECO:0000250"/>
    <property type="project" value="UniProtKB"/>
</dbReference>
<dbReference type="GO" id="GO:0015459">
    <property type="term" value="F:potassium channel regulator activity"/>
    <property type="evidence" value="ECO:0000250"/>
    <property type="project" value="UniProtKB"/>
</dbReference>
<dbReference type="GO" id="GO:0044325">
    <property type="term" value="F:transmembrane transporter binding"/>
    <property type="evidence" value="ECO:0007669"/>
    <property type="project" value="TreeGrafter"/>
</dbReference>
<dbReference type="GO" id="GO:0086011">
    <property type="term" value="P:membrane repolarization during action potential"/>
    <property type="evidence" value="ECO:0007669"/>
    <property type="project" value="TreeGrafter"/>
</dbReference>
<dbReference type="GO" id="GO:1902260">
    <property type="term" value="P:negative regulation of delayed rectifier potassium channel activity"/>
    <property type="evidence" value="ECO:0000250"/>
    <property type="project" value="UniProtKB"/>
</dbReference>
<dbReference type="GO" id="GO:0097623">
    <property type="term" value="P:potassium ion export across plasma membrane"/>
    <property type="evidence" value="ECO:0007669"/>
    <property type="project" value="TreeGrafter"/>
</dbReference>
<dbReference type="GO" id="GO:0086091">
    <property type="term" value="P:regulation of heart rate by cardiac conduction"/>
    <property type="evidence" value="ECO:0007669"/>
    <property type="project" value="TreeGrafter"/>
</dbReference>
<dbReference type="GO" id="GO:0060307">
    <property type="term" value="P:regulation of ventricular cardiac muscle cell membrane repolarization"/>
    <property type="evidence" value="ECO:0007669"/>
    <property type="project" value="TreeGrafter"/>
</dbReference>
<dbReference type="GO" id="GO:0086005">
    <property type="term" value="P:ventricular cardiac muscle cell action potential"/>
    <property type="evidence" value="ECO:0007669"/>
    <property type="project" value="TreeGrafter"/>
</dbReference>
<dbReference type="InterPro" id="IPR000369">
    <property type="entry name" value="K_chnl_KCNE"/>
</dbReference>
<dbReference type="InterPro" id="IPR005424">
    <property type="entry name" value="KCNE1"/>
</dbReference>
<dbReference type="PANTHER" id="PTHR15282:SF10">
    <property type="entry name" value="POTASSIUM VOLTAGE-GATED CHANNEL SUBFAMILY E MEMBER 1"/>
    <property type="match status" value="1"/>
</dbReference>
<dbReference type="PANTHER" id="PTHR15282">
    <property type="entry name" value="POTASSIUM VOLTAGE-GATED CHANNEL SUBFAMILY E MEMBER 1, 3"/>
    <property type="match status" value="1"/>
</dbReference>
<dbReference type="Pfam" id="PF02060">
    <property type="entry name" value="ISK_Channel"/>
    <property type="match status" value="1"/>
</dbReference>
<dbReference type="PRINTS" id="PR01604">
    <property type="entry name" value="KCNE1CHANNEL"/>
</dbReference>
<dbReference type="PRINTS" id="PR00168">
    <property type="entry name" value="KCNECHANNEL"/>
</dbReference>
<evidence type="ECO:0000250" key="1"/>
<evidence type="ECO:0000250" key="2">
    <source>
        <dbReference type="UniProtKB" id="P15382"/>
    </source>
</evidence>
<evidence type="ECO:0000250" key="3">
    <source>
        <dbReference type="UniProtKB" id="P15383"/>
    </source>
</evidence>
<evidence type="ECO:0000250" key="4">
    <source>
        <dbReference type="UniProtKB" id="P23299"/>
    </source>
</evidence>
<evidence type="ECO:0000255" key="5"/>
<evidence type="ECO:0000305" key="6"/>
<comment type="function">
    <text evidence="2">Ancillary protein that functions as a regulatory subunit of the voltage-gated potassium (Kv) channel complex composed of pore-forming and potassium-conducting alpha subunits and of regulatory beta subunits. KCNE1 beta subunit modulates the gating kinetics and enhances stability of the channel complex. Alters the gating of the delayed rectifier Kv channel containing KCNB1 alpha subunit. Associates with KCNQ1/KVLQT1 alpha subunit to form the slowly activating delayed rectifier cardiac potassium (IKs) channel responsible for ventricular muscle action potential repolarization. The outward current reaches its steady state only after 50 seconds. Assembly with KCNH2/HERG alpha subunit Kv channel may regulate the rapidly activating component of the delayed rectifying potassium current (IKr) in heart.</text>
</comment>
<comment type="subunit">
    <text evidence="2 3 4">Interacts with KCNB1. Interacts with KCNC2 (By similarity). Associates with KCNH2/HERG. Interacts with KCNQ1; targets the complex KCNQ1-KCNE1 to the membrane raft (By similarity).</text>
</comment>
<comment type="subcellular location">
    <subcellularLocation>
        <location evidence="2 3">Cell membrane</location>
        <topology evidence="2">Single-pass type I membrane protein</topology>
    </subcellularLocation>
    <subcellularLocation>
        <location evidence="3">Apical cell membrane</location>
    </subcellularLocation>
    <subcellularLocation>
        <location evidence="2">Membrane raft</location>
    </subcellularLocation>
    <text evidence="2 3">Colocalizes with KCNB1 at the plasma membrane (By similarity). Targets to the membrane raft when associated with KCNQ1 (By similarity).</text>
</comment>
<comment type="PTM">
    <text evidence="1">Phosphorylation inhibits the potassium current.</text>
</comment>
<comment type="similarity">
    <text evidence="6">Belongs to the potassium channel KCNE family.</text>
</comment>
<protein>
    <recommendedName>
        <fullName>Potassium voltage-gated channel subfamily E member 1</fullName>
    </recommendedName>
    <alternativeName>
        <fullName>Delayed rectifier potassium channel subunit IsK</fullName>
    </alternativeName>
    <alternativeName>
        <fullName>IKs producing slow voltage-gated potassium channel subunit beta Mink</fullName>
    </alternativeName>
    <alternativeName>
        <fullName>Minimal potassium channel</fullName>
    </alternativeName>
</protein>
<proteinExistence type="inferred from homology"/>
<gene>
    <name type="primary">KCNE1</name>
</gene>
<name>KCNE1_RABIT</name>